<organism>
    <name type="scientific">Human herpesvirus 6B (strain Z29)</name>
    <name type="common">HHV-6 variant B</name>
    <name type="synonym">Human B lymphotropic virus</name>
    <dbReference type="NCBI Taxonomy" id="36351"/>
    <lineage>
        <taxon>Viruses</taxon>
        <taxon>Duplodnaviria</taxon>
        <taxon>Heunggongvirae</taxon>
        <taxon>Peploviricota</taxon>
        <taxon>Herviviricetes</taxon>
        <taxon>Herpesvirales</taxon>
        <taxon>Orthoherpesviridae</taxon>
        <taxon>Betaherpesvirinae</taxon>
        <taxon>Roseolovirus</taxon>
        <taxon>Roseolovirus humanbeta6b</taxon>
        <taxon>Human herpesvirus 6B</taxon>
    </lineage>
</organism>
<reference key="1">
    <citation type="journal article" date="1999" name="J. Virol.">
        <title>Human herpesvirus 6B genome sequence: coding content and comparison with human herpesvirus 6A.</title>
        <authorList>
            <person name="Dominguez G."/>
            <person name="Dambaugh T.R."/>
            <person name="Stamey F.R."/>
            <person name="Dewhurst S."/>
            <person name="Inoue N."/>
            <person name="Pellett P.E."/>
        </authorList>
    </citation>
    <scope>NUCLEOTIDE SEQUENCE [LARGE SCALE GENOMIC DNA]</scope>
</reference>
<sequence>MDSVSFFNPYLEANRLKKKSRSSYIRILPRGIMHDGAAGLIKDVCDSEPRMFYRDRQYLLSKEMTWPSLDRVRSKDYDHTRMKFHIYDAVETLMFTDSIENLPFQYRHFVIPSGTVIRMFGRSEDGEKICVNVFGQEQYFYCECVDGKSLKATINNLMLTGEVKMSCSFVIEPADKLSLYGYNANTVVNLFKVSFGNFYVSQRIGKILQNEGFVVYEIDVDVLTRFFVDNGFLSFGWYNVKKYIPQDMGKGSNLEVEINCHVSDLVSLENVNWPLYGCWSFDIECLGQNGNFPDAENLGDIVIQISVVSFDTEGDRDERHLFTLGTCEQIDGVHIYEFASEFELLLGFFIFLRIESPEFITGYNINNFDLKYLCIRMDKIYHYEIGCFSKLKNGKIGISVPHEQYKKGFLQAQTKVFTSGVLYLDMYPVYSSKITAQNYKLDTIAKICLQQEKEQLSYKEIPKKFISGPSGRAVVGKYCLQDSVLVVRLFKQINYHYEVAEVARLAHVTARCVVFEGQQKKIFPCILTEAKRRNMILPSMVSSHNRQGIGYKGATVLEPKTGYYAVPTVVFDFQSLYPSIMMAHNLCYSTLVLDERQIAGLSESDILTVKLGDETHRFVKPCVRESVLGSLLKDWLAKRREVKAEMQNCSDPMMKLLLDKKQLALKTTCNSVYGVTGAAHGLLPCVAIAASVTCLGREMLCSTVDYVNSKMQSEQFFCEELGLTASDFTGDLKVEVIYGDTDSIFMSVRNMANESLRRIAPMIAKHITDRLFKSPIKLEFEKILCPLILICKKRYIGRQDDSLLIFKGVDLVRKTSCDFVKGVVKDIVDLLFFDEEVQTAAVEFSHMTQTQLREQGVPVGIHKILRRLCKAREELFQNRADVRHLMLSSVLSKEVAAYKQPNLAHLSVIRRLAQRKEEIPNVGDRIMYVLIAPSTGNKQTHNYELAEDPNYVLEHKIPIHAEKYFDQIIKAVTNAISPIFPKTDIKKEKLLLYLLPMKVYLDETFSAIAEVM</sequence>
<keyword id="KW-0235">DNA replication</keyword>
<keyword id="KW-0238">DNA-binding</keyword>
<keyword id="KW-0239">DNA-directed DNA polymerase</keyword>
<keyword id="KW-1048">Host nucleus</keyword>
<keyword id="KW-0548">Nucleotidyltransferase</keyword>
<keyword id="KW-1185">Reference proteome</keyword>
<keyword id="KW-0808">Transferase</keyword>
<keyword id="KW-1194">Viral DNA replication</keyword>
<organismHost>
    <name type="scientific">Homo sapiens</name>
    <name type="common">Human</name>
    <dbReference type="NCBI Taxonomy" id="9606"/>
</organismHost>
<gene>
    <name type="primary">U38</name>
</gene>
<proteinExistence type="inferred from homology"/>
<name>DPOL_HHV6Z</name>
<accession>Q9QJ32</accession>
<dbReference type="EC" id="2.7.7.7"/>
<dbReference type="EMBL" id="AF157706">
    <property type="protein sequence ID" value="AAD49652.1"/>
    <property type="molecule type" value="Genomic_DNA"/>
</dbReference>
<dbReference type="RefSeq" id="NP_050219.1">
    <property type="nucleotide sequence ID" value="NC_000898.1"/>
</dbReference>
<dbReference type="SMR" id="Q9QJ32"/>
<dbReference type="GeneID" id="1497040"/>
<dbReference type="KEGG" id="vg:1497040"/>
<dbReference type="Proteomes" id="UP000006930">
    <property type="component" value="Segment"/>
</dbReference>
<dbReference type="GO" id="GO:0042025">
    <property type="term" value="C:host cell nucleus"/>
    <property type="evidence" value="ECO:0007669"/>
    <property type="project" value="UniProtKB-SubCell"/>
</dbReference>
<dbReference type="GO" id="GO:0003677">
    <property type="term" value="F:DNA binding"/>
    <property type="evidence" value="ECO:0007669"/>
    <property type="project" value="UniProtKB-KW"/>
</dbReference>
<dbReference type="GO" id="GO:0003887">
    <property type="term" value="F:DNA-directed DNA polymerase activity"/>
    <property type="evidence" value="ECO:0007669"/>
    <property type="project" value="UniProtKB-KW"/>
</dbReference>
<dbReference type="GO" id="GO:0000166">
    <property type="term" value="F:nucleotide binding"/>
    <property type="evidence" value="ECO:0007669"/>
    <property type="project" value="InterPro"/>
</dbReference>
<dbReference type="GO" id="GO:0006261">
    <property type="term" value="P:DNA-templated DNA replication"/>
    <property type="evidence" value="ECO:0007669"/>
    <property type="project" value="TreeGrafter"/>
</dbReference>
<dbReference type="GO" id="GO:0039693">
    <property type="term" value="P:viral DNA genome replication"/>
    <property type="evidence" value="ECO:0007669"/>
    <property type="project" value="UniProtKB-KW"/>
</dbReference>
<dbReference type="Gene3D" id="1.10.132.60">
    <property type="entry name" value="DNA polymerase family B, C-terminal domain"/>
    <property type="match status" value="1"/>
</dbReference>
<dbReference type="Gene3D" id="3.30.342.10">
    <property type="entry name" value="DNA Polymerase, chain B, domain 1"/>
    <property type="match status" value="1"/>
</dbReference>
<dbReference type="Gene3D" id="1.10.287.690">
    <property type="entry name" value="Helix hairpin bin"/>
    <property type="match status" value="1"/>
</dbReference>
<dbReference type="Gene3D" id="3.90.1600.10">
    <property type="entry name" value="Palm domain of DNA polymerase"/>
    <property type="match status" value="1"/>
</dbReference>
<dbReference type="Gene3D" id="3.30.420.10">
    <property type="entry name" value="Ribonuclease H-like superfamily/Ribonuclease H"/>
    <property type="match status" value="1"/>
</dbReference>
<dbReference type="InterPro" id="IPR006172">
    <property type="entry name" value="DNA-dir_DNA_pol_B"/>
</dbReference>
<dbReference type="InterPro" id="IPR017964">
    <property type="entry name" value="DNA-dir_DNA_pol_B_CS"/>
</dbReference>
<dbReference type="InterPro" id="IPR006133">
    <property type="entry name" value="DNA-dir_DNA_pol_B_exonuc"/>
</dbReference>
<dbReference type="InterPro" id="IPR006134">
    <property type="entry name" value="DNA-dir_DNA_pol_B_multi_dom"/>
</dbReference>
<dbReference type="InterPro" id="IPR043502">
    <property type="entry name" value="DNA/RNA_pol_sf"/>
</dbReference>
<dbReference type="InterPro" id="IPR042087">
    <property type="entry name" value="DNA_pol_B_thumb"/>
</dbReference>
<dbReference type="InterPro" id="IPR023211">
    <property type="entry name" value="DNA_pol_palm_dom_sf"/>
</dbReference>
<dbReference type="InterPro" id="IPR050240">
    <property type="entry name" value="DNA_pol_type-B"/>
</dbReference>
<dbReference type="InterPro" id="IPR012337">
    <property type="entry name" value="RNaseH-like_sf"/>
</dbReference>
<dbReference type="InterPro" id="IPR036397">
    <property type="entry name" value="RNaseH_sf"/>
</dbReference>
<dbReference type="PANTHER" id="PTHR10322">
    <property type="entry name" value="DNA POLYMERASE CATALYTIC SUBUNIT"/>
    <property type="match status" value="1"/>
</dbReference>
<dbReference type="PANTHER" id="PTHR10322:SF23">
    <property type="entry name" value="DNA POLYMERASE DELTA CATALYTIC SUBUNIT"/>
    <property type="match status" value="1"/>
</dbReference>
<dbReference type="Pfam" id="PF00136">
    <property type="entry name" value="DNA_pol_B"/>
    <property type="match status" value="1"/>
</dbReference>
<dbReference type="Pfam" id="PF03104">
    <property type="entry name" value="DNA_pol_B_exo1"/>
    <property type="match status" value="1"/>
</dbReference>
<dbReference type="PRINTS" id="PR00106">
    <property type="entry name" value="DNAPOLB"/>
</dbReference>
<dbReference type="SMART" id="SM00486">
    <property type="entry name" value="POLBc"/>
    <property type="match status" value="1"/>
</dbReference>
<dbReference type="SUPFAM" id="SSF56672">
    <property type="entry name" value="DNA/RNA polymerases"/>
    <property type="match status" value="1"/>
</dbReference>
<dbReference type="SUPFAM" id="SSF53098">
    <property type="entry name" value="Ribonuclease H-like"/>
    <property type="match status" value="1"/>
</dbReference>
<dbReference type="PROSITE" id="PS00116">
    <property type="entry name" value="DNA_POLYMERASE_B"/>
    <property type="match status" value="1"/>
</dbReference>
<protein>
    <recommendedName>
        <fullName>DNA polymerase catalytic subunit</fullName>
        <ecNumber>2.7.7.7</ecNumber>
    </recommendedName>
</protein>
<comment type="function">
    <text evidence="1">Replicates viral genomic DNA.</text>
</comment>
<comment type="catalytic activity">
    <reaction>
        <text>DNA(n) + a 2'-deoxyribonucleoside 5'-triphosphate = DNA(n+1) + diphosphate</text>
        <dbReference type="Rhea" id="RHEA:22508"/>
        <dbReference type="Rhea" id="RHEA-COMP:17339"/>
        <dbReference type="Rhea" id="RHEA-COMP:17340"/>
        <dbReference type="ChEBI" id="CHEBI:33019"/>
        <dbReference type="ChEBI" id="CHEBI:61560"/>
        <dbReference type="ChEBI" id="CHEBI:173112"/>
        <dbReference type="EC" id="2.7.7.7"/>
    </reaction>
</comment>
<comment type="subcellular location">
    <subcellularLocation>
        <location evidence="1">Host nucleus</location>
    </subcellularLocation>
</comment>
<comment type="similarity">
    <text evidence="2">Belongs to the DNA polymerase type-B family.</text>
</comment>
<evidence type="ECO:0000250" key="1"/>
<evidence type="ECO:0000305" key="2"/>
<feature type="chain" id="PRO_0000408402" description="DNA polymerase catalytic subunit">
    <location>
        <begin position="1"/>
        <end position="1012"/>
    </location>
</feature>